<dbReference type="EC" id="1.1.1.37" evidence="1"/>
<dbReference type="EMBL" id="AJ621301">
    <property type="protein sequence ID" value="CAF18482.1"/>
    <property type="molecule type" value="Genomic_DNA"/>
</dbReference>
<dbReference type="EMBL" id="FN869859">
    <property type="protein sequence ID" value="CCC82058.1"/>
    <property type="molecule type" value="Genomic_DNA"/>
</dbReference>
<dbReference type="RefSeq" id="WP_014127312.1">
    <property type="nucleotide sequence ID" value="NC_016070.1"/>
</dbReference>
<dbReference type="SMR" id="Q704B2"/>
<dbReference type="STRING" id="768679.TTX_1427"/>
<dbReference type="PaxDb" id="768679-TTX_1427"/>
<dbReference type="GeneID" id="11262306"/>
<dbReference type="KEGG" id="ttn:TTX_1427"/>
<dbReference type="PATRIC" id="fig|768679.9.peg.1448"/>
<dbReference type="eggNOG" id="arCOG00246">
    <property type="taxonomic scope" value="Archaea"/>
</dbReference>
<dbReference type="HOGENOM" id="CLU_045401_2_1_2"/>
<dbReference type="OrthoDB" id="2596at2157"/>
<dbReference type="Proteomes" id="UP000002654">
    <property type="component" value="Chromosome"/>
</dbReference>
<dbReference type="GO" id="GO:0004459">
    <property type="term" value="F:L-lactate dehydrogenase activity"/>
    <property type="evidence" value="ECO:0007669"/>
    <property type="project" value="TreeGrafter"/>
</dbReference>
<dbReference type="GO" id="GO:0030060">
    <property type="term" value="F:L-malate dehydrogenase (NAD+) activity"/>
    <property type="evidence" value="ECO:0007669"/>
    <property type="project" value="UniProtKB-EC"/>
</dbReference>
<dbReference type="GO" id="GO:0006089">
    <property type="term" value="P:lactate metabolic process"/>
    <property type="evidence" value="ECO:0007669"/>
    <property type="project" value="TreeGrafter"/>
</dbReference>
<dbReference type="GO" id="GO:0006099">
    <property type="term" value="P:tricarboxylic acid cycle"/>
    <property type="evidence" value="ECO:0007669"/>
    <property type="project" value="UniProtKB-KW"/>
</dbReference>
<dbReference type="CDD" id="cd01339">
    <property type="entry name" value="LDH-like_MDH"/>
    <property type="match status" value="1"/>
</dbReference>
<dbReference type="FunFam" id="3.40.50.720:FF:000018">
    <property type="entry name" value="Malate dehydrogenase"/>
    <property type="match status" value="1"/>
</dbReference>
<dbReference type="Gene3D" id="3.90.110.10">
    <property type="entry name" value="Lactate dehydrogenase/glycoside hydrolase, family 4, C-terminal"/>
    <property type="match status" value="1"/>
</dbReference>
<dbReference type="Gene3D" id="3.40.50.720">
    <property type="entry name" value="NAD(P)-binding Rossmann-like Domain"/>
    <property type="match status" value="1"/>
</dbReference>
<dbReference type="InterPro" id="IPR001557">
    <property type="entry name" value="L-lactate/malate_DH"/>
</dbReference>
<dbReference type="InterPro" id="IPR022383">
    <property type="entry name" value="Lactate/malate_DH_C"/>
</dbReference>
<dbReference type="InterPro" id="IPR001236">
    <property type="entry name" value="Lactate/malate_DH_N"/>
</dbReference>
<dbReference type="InterPro" id="IPR015955">
    <property type="entry name" value="Lactate_DH/Glyco_Ohase_4_C"/>
</dbReference>
<dbReference type="InterPro" id="IPR011275">
    <property type="entry name" value="Malate_DH_type3"/>
</dbReference>
<dbReference type="InterPro" id="IPR036291">
    <property type="entry name" value="NAD(P)-bd_dom_sf"/>
</dbReference>
<dbReference type="NCBIfam" id="NF004863">
    <property type="entry name" value="PRK06223.1"/>
    <property type="match status" value="1"/>
</dbReference>
<dbReference type="PANTHER" id="PTHR43128">
    <property type="entry name" value="L-2-HYDROXYCARBOXYLATE DEHYDROGENASE (NAD(P)(+))"/>
    <property type="match status" value="1"/>
</dbReference>
<dbReference type="PANTHER" id="PTHR43128:SF16">
    <property type="entry name" value="L-LACTATE DEHYDROGENASE"/>
    <property type="match status" value="1"/>
</dbReference>
<dbReference type="Pfam" id="PF02866">
    <property type="entry name" value="Ldh_1_C"/>
    <property type="match status" value="1"/>
</dbReference>
<dbReference type="Pfam" id="PF00056">
    <property type="entry name" value="Ldh_1_N"/>
    <property type="match status" value="1"/>
</dbReference>
<dbReference type="PIRSF" id="PIRSF000102">
    <property type="entry name" value="Lac_mal_DH"/>
    <property type="match status" value="1"/>
</dbReference>
<dbReference type="PRINTS" id="PR00086">
    <property type="entry name" value="LLDHDRGNASE"/>
</dbReference>
<dbReference type="SUPFAM" id="SSF56327">
    <property type="entry name" value="LDH C-terminal domain-like"/>
    <property type="match status" value="1"/>
</dbReference>
<dbReference type="SUPFAM" id="SSF51735">
    <property type="entry name" value="NAD(P)-binding Rossmann-fold domains"/>
    <property type="match status" value="1"/>
</dbReference>
<accession>Q704B2</accession>
<accession>G4RKG3</accession>
<organism>
    <name type="scientific">Thermoproteus tenax (strain ATCC 35583 / DSM 2078 / JCM 9277 / NBRC 100435 / Kra 1)</name>
    <dbReference type="NCBI Taxonomy" id="768679"/>
    <lineage>
        <taxon>Archaea</taxon>
        <taxon>Thermoproteota</taxon>
        <taxon>Thermoprotei</taxon>
        <taxon>Thermoproteales</taxon>
        <taxon>Thermoproteaceae</taxon>
        <taxon>Thermoproteus</taxon>
    </lineage>
</organism>
<name>MDH_THETK</name>
<proteinExistence type="inferred from homology"/>
<reference key="1">
    <citation type="journal article" date="2004" name="J. Bacteriol.">
        <title>Reconstruction of the central carbohydrate metabolism of Thermoproteus tenax using genomic and biochemical data.</title>
        <authorList>
            <person name="Siebers B."/>
            <person name="Tjaden B."/>
            <person name="Michalke K."/>
            <person name="Doerr C."/>
            <person name="Ahmed H."/>
            <person name="Zaparty M."/>
            <person name="Gordon P."/>
            <person name="Sensen C.W."/>
            <person name="Zibat A."/>
            <person name="Klenk H.-P."/>
            <person name="Schuster S.C."/>
            <person name="Hensel R."/>
        </authorList>
    </citation>
    <scope>NUCLEOTIDE SEQUENCE [GENOMIC DNA]</scope>
    <source>
        <strain>ATCC 35583 / DSM 2078 / JCM 9277 / NBRC 100435 / Kra 1</strain>
    </source>
</reference>
<reference key="2">
    <citation type="journal article" date="2011" name="PLoS ONE">
        <title>The complete genome sequence of Thermoproteus tenax: a physiologically versatile member of the Crenarchaeota.</title>
        <authorList>
            <person name="Siebers B."/>
            <person name="Zaparty M."/>
            <person name="Raddatz G."/>
            <person name="Tjaden B."/>
            <person name="Albers S.V."/>
            <person name="Bell S.D."/>
            <person name="Blombach F."/>
            <person name="Kletzin A."/>
            <person name="Kyrpides N."/>
            <person name="Lanz C."/>
            <person name="Plagens A."/>
            <person name="Rampp M."/>
            <person name="Rosinus A."/>
            <person name="von Jan M."/>
            <person name="Makarova K.S."/>
            <person name="Klenk H.P."/>
            <person name="Schuster S.C."/>
            <person name="Hensel R."/>
        </authorList>
    </citation>
    <scope>NUCLEOTIDE SEQUENCE [LARGE SCALE GENOMIC DNA]</scope>
    <source>
        <strain>ATCC 35583 / DSM 2078 / JCM 9277 / NBRC 100435 / Kra 1</strain>
    </source>
</reference>
<sequence>MITVVGSGRVGATTAAMLGVLGVDNKIVLIDIIKGLPQGEALDLNHMSSILGLDVYYTGSNDYADMKGSDLVIVTAGLARKPGMTREQLLEQNAQIVANIGKEIAKYAPDSVVILTTNPLDAMTYVMWRATGFSRERVVGFSGVLDGGRLAFYAGQKLGISPASIIPIVLGQHGESMFPVPSKSFVFGVPLDKLLKPEEIKEAVEETVKAGARITELRGFSSNWAPGAGVAIMAKAVKRDERRALIASVVLDGEYGVRGIPVEVPVVLGRGGAIKVLEVELSPEEKQRFQQSVEAISKLLNSLPAQYK</sequence>
<feature type="chain" id="PRO_0000113496" description="Malate dehydrogenase">
    <location>
        <begin position="1"/>
        <end position="308"/>
    </location>
</feature>
<feature type="active site" description="Proton acceptor" evidence="2">
    <location>
        <position position="173"/>
    </location>
</feature>
<feature type="binding site" evidence="1">
    <location>
        <begin position="6"/>
        <end position="11"/>
    </location>
    <ligand>
        <name>NAD(+)</name>
        <dbReference type="ChEBI" id="CHEBI:57540"/>
    </ligand>
</feature>
<feature type="binding site" evidence="1">
    <location>
        <position position="31"/>
    </location>
    <ligand>
        <name>NAD(+)</name>
        <dbReference type="ChEBI" id="CHEBI:57540"/>
    </ligand>
</feature>
<feature type="binding site" evidence="2">
    <location>
        <position position="80"/>
    </location>
    <ligand>
        <name>substrate</name>
    </ligand>
</feature>
<feature type="binding site" evidence="2">
    <location>
        <position position="86"/>
    </location>
    <ligand>
        <name>substrate</name>
    </ligand>
</feature>
<feature type="binding site" evidence="1">
    <location>
        <position position="93"/>
    </location>
    <ligand>
        <name>NAD(+)</name>
        <dbReference type="ChEBI" id="CHEBI:57540"/>
    </ligand>
</feature>
<feature type="binding site" evidence="1">
    <location>
        <begin position="116"/>
        <end position="118"/>
    </location>
    <ligand>
        <name>NAD(+)</name>
        <dbReference type="ChEBI" id="CHEBI:57540"/>
    </ligand>
</feature>
<feature type="binding site" evidence="2">
    <location>
        <position position="118"/>
    </location>
    <ligand>
        <name>substrate</name>
    </ligand>
</feature>
<feature type="binding site" evidence="2">
    <location>
        <position position="149"/>
    </location>
    <ligand>
        <name>substrate</name>
    </ligand>
</feature>
<protein>
    <recommendedName>
        <fullName evidence="1">Malate dehydrogenase</fullName>
        <ecNumber evidence="1">1.1.1.37</ecNumber>
    </recommendedName>
</protein>
<evidence type="ECO:0000250" key="1">
    <source>
        <dbReference type="UniProtKB" id="O08349"/>
    </source>
</evidence>
<evidence type="ECO:0000250" key="2">
    <source>
        <dbReference type="UniProtKB" id="P61889"/>
    </source>
</evidence>
<evidence type="ECO:0000305" key="3"/>
<keyword id="KW-0520">NAD</keyword>
<keyword id="KW-0560">Oxidoreductase</keyword>
<keyword id="KW-1185">Reference proteome</keyword>
<keyword id="KW-0816">Tricarboxylic acid cycle</keyword>
<comment type="function">
    <text evidence="1">Catalyzes the reversible oxidation of malate to oxaloacetate.</text>
</comment>
<comment type="catalytic activity">
    <reaction evidence="1">
        <text>(S)-malate + NAD(+) = oxaloacetate + NADH + H(+)</text>
        <dbReference type="Rhea" id="RHEA:21432"/>
        <dbReference type="ChEBI" id="CHEBI:15378"/>
        <dbReference type="ChEBI" id="CHEBI:15589"/>
        <dbReference type="ChEBI" id="CHEBI:16452"/>
        <dbReference type="ChEBI" id="CHEBI:57540"/>
        <dbReference type="ChEBI" id="CHEBI:57945"/>
        <dbReference type="EC" id="1.1.1.37"/>
    </reaction>
</comment>
<comment type="similarity">
    <text evidence="3">Belongs to the LDH/MDH superfamily.</text>
</comment>
<gene>
    <name type="primary">mdh</name>
    <name type="ordered locus">TTX_1427</name>
</gene>